<proteinExistence type="inferred from homology"/>
<dbReference type="EC" id="3.1.1.29" evidence="1"/>
<dbReference type="EMBL" id="CP000414">
    <property type="protein sequence ID" value="ABJ61520.1"/>
    <property type="molecule type" value="Genomic_DNA"/>
</dbReference>
<dbReference type="RefSeq" id="WP_010291225.1">
    <property type="nucleotide sequence ID" value="NC_008531.1"/>
</dbReference>
<dbReference type="SMR" id="Q03Z52"/>
<dbReference type="EnsemblBacteria" id="ABJ61520">
    <property type="protein sequence ID" value="ABJ61520"/>
    <property type="gene ID" value="LEUM_0398"/>
</dbReference>
<dbReference type="GeneID" id="29575834"/>
<dbReference type="KEGG" id="lme:LEUM_0398"/>
<dbReference type="eggNOG" id="COG0193">
    <property type="taxonomic scope" value="Bacteria"/>
</dbReference>
<dbReference type="HOGENOM" id="CLU_062456_4_1_9"/>
<dbReference type="Proteomes" id="UP000000362">
    <property type="component" value="Chromosome"/>
</dbReference>
<dbReference type="GO" id="GO:0005737">
    <property type="term" value="C:cytoplasm"/>
    <property type="evidence" value="ECO:0007669"/>
    <property type="project" value="UniProtKB-SubCell"/>
</dbReference>
<dbReference type="GO" id="GO:0004045">
    <property type="term" value="F:peptidyl-tRNA hydrolase activity"/>
    <property type="evidence" value="ECO:0007669"/>
    <property type="project" value="UniProtKB-UniRule"/>
</dbReference>
<dbReference type="GO" id="GO:0000049">
    <property type="term" value="F:tRNA binding"/>
    <property type="evidence" value="ECO:0007669"/>
    <property type="project" value="UniProtKB-UniRule"/>
</dbReference>
<dbReference type="GO" id="GO:0006515">
    <property type="term" value="P:protein quality control for misfolded or incompletely synthesized proteins"/>
    <property type="evidence" value="ECO:0007669"/>
    <property type="project" value="UniProtKB-UniRule"/>
</dbReference>
<dbReference type="GO" id="GO:0072344">
    <property type="term" value="P:rescue of stalled ribosome"/>
    <property type="evidence" value="ECO:0007669"/>
    <property type="project" value="UniProtKB-UniRule"/>
</dbReference>
<dbReference type="CDD" id="cd00462">
    <property type="entry name" value="PTH"/>
    <property type="match status" value="1"/>
</dbReference>
<dbReference type="FunFam" id="3.40.50.1470:FF:000001">
    <property type="entry name" value="Peptidyl-tRNA hydrolase"/>
    <property type="match status" value="1"/>
</dbReference>
<dbReference type="Gene3D" id="3.40.50.1470">
    <property type="entry name" value="Peptidyl-tRNA hydrolase"/>
    <property type="match status" value="1"/>
</dbReference>
<dbReference type="HAMAP" id="MF_00083">
    <property type="entry name" value="Pept_tRNA_hydro_bact"/>
    <property type="match status" value="1"/>
</dbReference>
<dbReference type="InterPro" id="IPR001328">
    <property type="entry name" value="Pept_tRNA_hydro"/>
</dbReference>
<dbReference type="InterPro" id="IPR018171">
    <property type="entry name" value="Pept_tRNA_hydro_CS"/>
</dbReference>
<dbReference type="InterPro" id="IPR036416">
    <property type="entry name" value="Pept_tRNA_hydro_sf"/>
</dbReference>
<dbReference type="NCBIfam" id="TIGR00447">
    <property type="entry name" value="pth"/>
    <property type="match status" value="1"/>
</dbReference>
<dbReference type="PANTHER" id="PTHR17224">
    <property type="entry name" value="PEPTIDYL-TRNA HYDROLASE"/>
    <property type="match status" value="1"/>
</dbReference>
<dbReference type="PANTHER" id="PTHR17224:SF1">
    <property type="entry name" value="PEPTIDYL-TRNA HYDROLASE"/>
    <property type="match status" value="1"/>
</dbReference>
<dbReference type="Pfam" id="PF01195">
    <property type="entry name" value="Pept_tRNA_hydro"/>
    <property type="match status" value="1"/>
</dbReference>
<dbReference type="SUPFAM" id="SSF53178">
    <property type="entry name" value="Peptidyl-tRNA hydrolase-like"/>
    <property type="match status" value="1"/>
</dbReference>
<dbReference type="PROSITE" id="PS01195">
    <property type="entry name" value="PEPT_TRNA_HYDROL_1"/>
    <property type="match status" value="1"/>
</dbReference>
<dbReference type="PROSITE" id="PS01196">
    <property type="entry name" value="PEPT_TRNA_HYDROL_2"/>
    <property type="match status" value="1"/>
</dbReference>
<name>PTH_LEUMM</name>
<gene>
    <name evidence="1" type="primary">pth</name>
    <name type="ordered locus">LEUM_0398</name>
</gene>
<reference key="1">
    <citation type="journal article" date="2006" name="Proc. Natl. Acad. Sci. U.S.A.">
        <title>Comparative genomics of the lactic acid bacteria.</title>
        <authorList>
            <person name="Makarova K.S."/>
            <person name="Slesarev A."/>
            <person name="Wolf Y.I."/>
            <person name="Sorokin A."/>
            <person name="Mirkin B."/>
            <person name="Koonin E.V."/>
            <person name="Pavlov A."/>
            <person name="Pavlova N."/>
            <person name="Karamychev V."/>
            <person name="Polouchine N."/>
            <person name="Shakhova V."/>
            <person name="Grigoriev I."/>
            <person name="Lou Y."/>
            <person name="Rohksar D."/>
            <person name="Lucas S."/>
            <person name="Huang K."/>
            <person name="Goodstein D.M."/>
            <person name="Hawkins T."/>
            <person name="Plengvidhya V."/>
            <person name="Welker D."/>
            <person name="Hughes J."/>
            <person name="Goh Y."/>
            <person name="Benson A."/>
            <person name="Baldwin K."/>
            <person name="Lee J.-H."/>
            <person name="Diaz-Muniz I."/>
            <person name="Dosti B."/>
            <person name="Smeianov V."/>
            <person name="Wechter W."/>
            <person name="Barabote R."/>
            <person name="Lorca G."/>
            <person name="Altermann E."/>
            <person name="Barrangou R."/>
            <person name="Ganesan B."/>
            <person name="Xie Y."/>
            <person name="Rawsthorne H."/>
            <person name="Tamir D."/>
            <person name="Parker C."/>
            <person name="Breidt F."/>
            <person name="Broadbent J.R."/>
            <person name="Hutkins R."/>
            <person name="O'Sullivan D."/>
            <person name="Steele J."/>
            <person name="Unlu G."/>
            <person name="Saier M.H. Jr."/>
            <person name="Klaenhammer T."/>
            <person name="Richardson P."/>
            <person name="Kozyavkin S."/>
            <person name="Weimer B.C."/>
            <person name="Mills D.A."/>
        </authorList>
    </citation>
    <scope>NUCLEOTIDE SEQUENCE [LARGE SCALE GENOMIC DNA]</scope>
    <source>
        <strain>ATCC 8293 / DSM 20343 / BCRC 11652 / CCM 1803 / JCM 6124 / NCDO 523 / NBRC 100496 / NCIMB 8023 / NCTC 12954 / NRRL B-1118 / 37Y</strain>
    </source>
</reference>
<keyword id="KW-0963">Cytoplasm</keyword>
<keyword id="KW-0378">Hydrolase</keyword>
<keyword id="KW-1185">Reference proteome</keyword>
<keyword id="KW-0694">RNA-binding</keyword>
<keyword id="KW-0820">tRNA-binding</keyword>
<accession>Q03Z52</accession>
<evidence type="ECO:0000255" key="1">
    <source>
        <dbReference type="HAMAP-Rule" id="MF_00083"/>
    </source>
</evidence>
<protein>
    <recommendedName>
        <fullName evidence="1">Peptidyl-tRNA hydrolase</fullName>
        <shortName evidence="1">Pth</shortName>
        <ecNumber evidence="1">3.1.1.29</ecNumber>
    </recommendedName>
</protein>
<sequence>MKFIFGLGNIGAEYDQTRHNIGFMAVDAFATANHMSFSPSKQFALVAKTIIGGESVMLVKPTTYMNDSGKAVRAILDYYDGDVDDVLVLVDDMDLPFGKMRFRAKGSAGGHNGLKSIMTHTGSQTFLRLKFGLGHPVHEQNVVVNYVLGKFTAAEKPDIDAMLDRSTQAIADWIQGATAPELSNRYNG</sequence>
<comment type="function">
    <text evidence="1">Hydrolyzes ribosome-free peptidyl-tRNAs (with 1 or more amino acids incorporated), which drop off the ribosome during protein synthesis, or as a result of ribosome stalling.</text>
</comment>
<comment type="function">
    <text evidence="1">Catalyzes the release of premature peptidyl moieties from peptidyl-tRNA molecules trapped in stalled 50S ribosomal subunits, and thus maintains levels of free tRNAs and 50S ribosomes.</text>
</comment>
<comment type="catalytic activity">
    <reaction evidence="1">
        <text>an N-acyl-L-alpha-aminoacyl-tRNA + H2O = an N-acyl-L-amino acid + a tRNA + H(+)</text>
        <dbReference type="Rhea" id="RHEA:54448"/>
        <dbReference type="Rhea" id="RHEA-COMP:10123"/>
        <dbReference type="Rhea" id="RHEA-COMP:13883"/>
        <dbReference type="ChEBI" id="CHEBI:15377"/>
        <dbReference type="ChEBI" id="CHEBI:15378"/>
        <dbReference type="ChEBI" id="CHEBI:59874"/>
        <dbReference type="ChEBI" id="CHEBI:78442"/>
        <dbReference type="ChEBI" id="CHEBI:138191"/>
        <dbReference type="EC" id="3.1.1.29"/>
    </reaction>
</comment>
<comment type="subunit">
    <text evidence="1">Monomer.</text>
</comment>
<comment type="subcellular location">
    <subcellularLocation>
        <location evidence="1">Cytoplasm</location>
    </subcellularLocation>
</comment>
<comment type="similarity">
    <text evidence="1">Belongs to the PTH family.</text>
</comment>
<organism>
    <name type="scientific">Leuconostoc mesenteroides subsp. mesenteroides (strain ATCC 8293 / DSM 20343 / BCRC 11652 / CCM 1803 / JCM 6124 / NCDO 523 / NBRC 100496 / NCIMB 8023 / NCTC 12954 / NRRL B-1118 / 37Y)</name>
    <dbReference type="NCBI Taxonomy" id="203120"/>
    <lineage>
        <taxon>Bacteria</taxon>
        <taxon>Bacillati</taxon>
        <taxon>Bacillota</taxon>
        <taxon>Bacilli</taxon>
        <taxon>Lactobacillales</taxon>
        <taxon>Lactobacillaceae</taxon>
        <taxon>Leuconostoc</taxon>
    </lineage>
</organism>
<feature type="chain" id="PRO_1000010607" description="Peptidyl-tRNA hydrolase">
    <location>
        <begin position="1"/>
        <end position="188"/>
    </location>
</feature>
<feature type="active site" description="Proton acceptor" evidence="1">
    <location>
        <position position="19"/>
    </location>
</feature>
<feature type="binding site" evidence="1">
    <location>
        <position position="14"/>
    </location>
    <ligand>
        <name>tRNA</name>
        <dbReference type="ChEBI" id="CHEBI:17843"/>
    </ligand>
</feature>
<feature type="binding site" evidence="1">
    <location>
        <position position="64"/>
    </location>
    <ligand>
        <name>tRNA</name>
        <dbReference type="ChEBI" id="CHEBI:17843"/>
    </ligand>
</feature>
<feature type="binding site" evidence="1">
    <location>
        <position position="66"/>
    </location>
    <ligand>
        <name>tRNA</name>
        <dbReference type="ChEBI" id="CHEBI:17843"/>
    </ligand>
</feature>
<feature type="binding site" evidence="1">
    <location>
        <position position="112"/>
    </location>
    <ligand>
        <name>tRNA</name>
        <dbReference type="ChEBI" id="CHEBI:17843"/>
    </ligand>
</feature>
<feature type="site" description="Discriminates between blocked and unblocked aminoacyl-tRNA" evidence="1">
    <location>
        <position position="9"/>
    </location>
</feature>
<feature type="site" description="Stabilizes the basic form of H active site to accept a proton" evidence="1">
    <location>
        <position position="91"/>
    </location>
</feature>